<sequence>MAPSQKALLVLVLSMLLTASDSWARRIDCKVFVFAPICRGVAAKRGGDSLSVGGSAELDDALTDPFLRSEEPREWRELTRLSRVLQTFLSHPTGETEQHD</sequence>
<proteinExistence type="evidence at protein level"/>
<keyword id="KW-0002">3D-structure</keyword>
<keyword id="KW-0165">Cleavage on pair of basic residues</keyword>
<keyword id="KW-0903">Direct protein sequencing</keyword>
<keyword id="KW-1015">Disulfide bond</keyword>
<keyword id="KW-0528">Neurotoxin</keyword>
<keyword id="KW-0964">Secreted</keyword>
<keyword id="KW-0732">Signal</keyword>
<keyword id="KW-0800">Toxin</keyword>
<name>CELE_CONVC</name>
<dbReference type="EMBL" id="GAIH01000102">
    <property type="protein sequence ID" value="JAI08987.1"/>
    <property type="molecule type" value="mRNA"/>
</dbReference>
<dbReference type="PDB" id="8F04">
    <property type="method" value="NMR"/>
    <property type="chains" value="A=25-43"/>
</dbReference>
<dbReference type="PDBsum" id="8F04"/>
<dbReference type="SMR" id="A0A0F7YZQ7"/>
<dbReference type="ConoServer" id="6727">
    <property type="toxin name" value="elevenin-Vc1 precursor"/>
</dbReference>
<dbReference type="GO" id="GO:0005576">
    <property type="term" value="C:extracellular region"/>
    <property type="evidence" value="ECO:0007669"/>
    <property type="project" value="UniProtKB-SubCell"/>
</dbReference>
<dbReference type="GO" id="GO:0090729">
    <property type="term" value="F:toxin activity"/>
    <property type="evidence" value="ECO:0007669"/>
    <property type="project" value="UniProtKB-KW"/>
</dbReference>
<reference key="1">
    <citation type="journal article" date="2014" name="PLoS ONE">
        <title>Diversity of conotoxin gene superfamilies in the venomous snail, Conus victoriae.</title>
        <authorList>
            <person name="Robinson S.D."/>
            <person name="Safavi-Hemami H."/>
            <person name="McIntosh L.D."/>
            <person name="Purcell A.W."/>
            <person name="Norton R.S."/>
            <person name="Papenfuss A.T."/>
        </authorList>
    </citation>
    <scope>NUCLEOTIDE SEQUENCE [MRNA]</scope>
</reference>
<reference key="2">
    <citation type="journal article" date="2017" name="Gen. Comp. Endocrinol.">
        <title>Hormone-like peptides in the venoms of marine cone snails.</title>
        <authorList>
            <person name="Robinson S.D."/>
            <person name="Li Q."/>
            <person name="Bandyopadhyay P.K."/>
            <person name="Gajewiak J."/>
            <person name="Yandell M."/>
            <person name="Papenfuss A.T."/>
            <person name="Purcell A.W."/>
            <person name="Norton R.S."/>
            <person name="Safavi-Hemami H."/>
        </authorList>
    </citation>
    <scope>NUCLEOTIDE SEQUENCE [MRNA]</scope>
    <scope>PROTEIN SEQUENCE OF 25-43</scope>
    <scope>SUBUNIT</scope>
    <scope>DISULFIDE BOND</scope>
    <scope>SUBCELLULAR LOCATION</scope>
    <source>
        <tissue>Venom</tissue>
        <tissue>Venom gland</tissue>
    </source>
</reference>
<reference key="3">
    <citation type="journal article" date="2023" name="Mar. Drugs">
        <title>Characterisation of elevenin-Vc1 from the venom of Conus victoriae: a structural analogue of alpha-conotoxins.</title>
        <authorList>
            <person name="Krishnarjuna B."/>
            <person name="Sunanda P."/>
            <person name="Seow J."/>
            <person name="Tae H.-S."/>
            <person name="Robinson S.D."/>
            <person name="Belgi A."/>
            <person name="Robinson A.J."/>
            <person name="Safavi-Hemami H."/>
            <person name="Adams D.J."/>
            <person name="Norton R.S."/>
        </authorList>
    </citation>
    <scope>STRUCTURE BY NMR OF 25-43</scope>
    <scope>SYNTHESIS OF 25-43</scope>
    <scope>FUNCTION</scope>
    <scope>BIOASSAY</scope>
    <scope>DISULFIDE BOND</scope>
    <scope>MUTAGENESIS OF 35-ARG--ILE-37</scope>
</reference>
<organism>
    <name type="scientific">Conus victoriae</name>
    <name type="common">Queen Victoria cone</name>
    <dbReference type="NCBI Taxonomy" id="319920"/>
    <lineage>
        <taxon>Eukaryota</taxon>
        <taxon>Metazoa</taxon>
        <taxon>Spiralia</taxon>
        <taxon>Lophotrochozoa</taxon>
        <taxon>Mollusca</taxon>
        <taxon>Gastropoda</taxon>
        <taxon>Caenogastropoda</taxon>
        <taxon>Neogastropoda</taxon>
        <taxon>Conoidea</taxon>
        <taxon>Conidae</taxon>
        <taxon>Conus</taxon>
        <taxon>Cylinder</taxon>
    </lineage>
</organism>
<accession>A0A0F7YZQ7</accession>
<feature type="signal peptide" evidence="1">
    <location>
        <begin position="1"/>
        <end position="24"/>
    </location>
</feature>
<feature type="peptide" id="PRO_5002525421" description="Elevenin-Vc1" evidence="1">
    <location>
        <begin position="25"/>
        <end position="43"/>
    </location>
</feature>
<feature type="propeptide" id="PRO_0000439357" evidence="1">
    <location>
        <begin position="44"/>
        <end position="100"/>
    </location>
</feature>
<feature type="disulfide bond" evidence="1 2">
    <location>
        <begin position="29"/>
        <end position="38"/>
    </location>
</feature>
<feature type="mutagenesis site" description="No change in activity towards nAChRs." evidence="2">
    <original>API</original>
    <variation>DPR</variation>
    <location>
        <begin position="35"/>
        <end position="37"/>
    </location>
</feature>
<feature type="turn" evidence="6">
    <location>
        <begin position="29"/>
        <end position="31"/>
    </location>
</feature>
<feature type="turn" evidence="6">
    <location>
        <begin position="38"/>
        <end position="42"/>
    </location>
</feature>
<comment type="function">
    <text evidence="2">May mimic the function of prey elevenin neuropeptide. In vivo, intracranial injection in mice induces hyperactivity (tested at 5 and 10 nM).</text>
</comment>
<comment type="subunit">
    <text evidence="1">Monomer.</text>
</comment>
<comment type="subcellular location">
    <subcellularLocation>
        <location evidence="1">Secreted</location>
    </subcellularLocation>
</comment>
<comment type="tissue specificity">
    <text evidence="5">Expressed by the venom duct.</text>
</comment>
<comment type="domain">
    <text evidence="4">The cysteine framework is C-C.</text>
</comment>
<comment type="miscellaneous">
    <text evidence="2">Negative results: has no effect on six different human nAChR subtypes including alpha-1-beta-1-epsilon-delta-epsilon/CHRNA1-CHRNB1-CHRND-CHRNE, alpha-3-beta-2/CHRNA3-CHRNB2, alpha-3-beta-4/CHRNA3-CHRNB4, alpha-4-beta-2/CHRNA4-CHRNB2, alpha-7/CHRNA7 and alpha-9-alpha-10/CHRNA9-CHRNA10, when tested at 1 uM.</text>
</comment>
<comment type="similarity">
    <text evidence="4">Belongs to the elevenin family.</text>
</comment>
<protein>
    <recommendedName>
        <fullName evidence="3">Elevenin-Vc1</fullName>
    </recommendedName>
</protein>
<evidence type="ECO:0000269" key="1">
    <source>
    </source>
</evidence>
<evidence type="ECO:0000269" key="2">
    <source>
    </source>
</evidence>
<evidence type="ECO:0000303" key="3">
    <source>
    </source>
</evidence>
<evidence type="ECO:0000305" key="4"/>
<evidence type="ECO:0000305" key="5">
    <source>
    </source>
</evidence>
<evidence type="ECO:0007829" key="6">
    <source>
        <dbReference type="PDB" id="8F04"/>
    </source>
</evidence>